<name>LSG1_DROME</name>
<evidence type="ECO:0000255" key="1"/>
<evidence type="ECO:0000255" key="2">
    <source>
        <dbReference type="PROSITE-ProRule" id="PRU01058"/>
    </source>
</evidence>
<evidence type="ECO:0000256" key="3">
    <source>
        <dbReference type="SAM" id="MobiDB-lite"/>
    </source>
</evidence>
<evidence type="ECO:0000269" key="4">
    <source>
    </source>
</evidence>
<evidence type="ECO:0000269" key="5">
    <source>
    </source>
</evidence>
<comment type="function">
    <text evidence="5">GTPase required for the nuclear export of the 60S ribosomal subunit. Probably acts by mediating the release of Nmd3 from the 60S ribosomal subunit after export into the cytoplasm. Regulator of body size; acts in serotonergic neurons to regulate insulin signaling and thus exerts global growth control.</text>
</comment>
<comment type="subcellular location">
    <subcellularLocation>
        <location evidence="5">Cytoplasm</location>
    </subcellularLocation>
    <text>Punctate distribution.</text>
</comment>
<comment type="tissue specificity">
    <text evidence="5">Expressed in larval serotonergic neurons.</text>
</comment>
<comment type="domain">
    <text>In contrast to other GTP-binding proteins, this family is characterized by a circular permutation of the GTPase motifs described by a G4-G1-G3 pattern.</text>
</comment>
<comment type="disruption phenotype">
    <text evidence="5">Larvae reach less than 60% of normal size and have fewer and smaller cells, the adults that survive exhibit normal body proportions and are healthy. In the brains excess serotonin and insulin accumulate, while peripheral insulin pathway activation is low.</text>
</comment>
<comment type="similarity">
    <text evidence="2">Belongs to the TRAFAC class YlqF/YawG GTPase family. LSG1 subfamily.</text>
</comment>
<reference key="1">
    <citation type="journal article" date="2000" name="Science">
        <title>The genome sequence of Drosophila melanogaster.</title>
        <authorList>
            <person name="Adams M.D."/>
            <person name="Celniker S.E."/>
            <person name="Holt R.A."/>
            <person name="Evans C.A."/>
            <person name="Gocayne J.D."/>
            <person name="Amanatides P.G."/>
            <person name="Scherer S.E."/>
            <person name="Li P.W."/>
            <person name="Hoskins R.A."/>
            <person name="Galle R.F."/>
            <person name="George R.A."/>
            <person name="Lewis S.E."/>
            <person name="Richards S."/>
            <person name="Ashburner M."/>
            <person name="Henderson S.N."/>
            <person name="Sutton G.G."/>
            <person name="Wortman J.R."/>
            <person name="Yandell M.D."/>
            <person name="Zhang Q."/>
            <person name="Chen L.X."/>
            <person name="Brandon R.C."/>
            <person name="Rogers Y.-H.C."/>
            <person name="Blazej R.G."/>
            <person name="Champe M."/>
            <person name="Pfeiffer B.D."/>
            <person name="Wan K.H."/>
            <person name="Doyle C."/>
            <person name="Baxter E.G."/>
            <person name="Helt G."/>
            <person name="Nelson C.R."/>
            <person name="Miklos G.L.G."/>
            <person name="Abril J.F."/>
            <person name="Agbayani A."/>
            <person name="An H.-J."/>
            <person name="Andrews-Pfannkoch C."/>
            <person name="Baldwin D."/>
            <person name="Ballew R.M."/>
            <person name="Basu A."/>
            <person name="Baxendale J."/>
            <person name="Bayraktaroglu L."/>
            <person name="Beasley E.M."/>
            <person name="Beeson K.Y."/>
            <person name="Benos P.V."/>
            <person name="Berman B.P."/>
            <person name="Bhandari D."/>
            <person name="Bolshakov S."/>
            <person name="Borkova D."/>
            <person name="Botchan M.R."/>
            <person name="Bouck J."/>
            <person name="Brokstein P."/>
            <person name="Brottier P."/>
            <person name="Burtis K.C."/>
            <person name="Busam D.A."/>
            <person name="Butler H."/>
            <person name="Cadieu E."/>
            <person name="Center A."/>
            <person name="Chandra I."/>
            <person name="Cherry J.M."/>
            <person name="Cawley S."/>
            <person name="Dahlke C."/>
            <person name="Davenport L.B."/>
            <person name="Davies P."/>
            <person name="de Pablos B."/>
            <person name="Delcher A."/>
            <person name="Deng Z."/>
            <person name="Mays A.D."/>
            <person name="Dew I."/>
            <person name="Dietz S.M."/>
            <person name="Dodson K."/>
            <person name="Doup L.E."/>
            <person name="Downes M."/>
            <person name="Dugan-Rocha S."/>
            <person name="Dunkov B.C."/>
            <person name="Dunn P."/>
            <person name="Durbin K.J."/>
            <person name="Evangelista C.C."/>
            <person name="Ferraz C."/>
            <person name="Ferriera S."/>
            <person name="Fleischmann W."/>
            <person name="Fosler C."/>
            <person name="Gabrielian A.E."/>
            <person name="Garg N.S."/>
            <person name="Gelbart W.M."/>
            <person name="Glasser K."/>
            <person name="Glodek A."/>
            <person name="Gong F."/>
            <person name="Gorrell J.H."/>
            <person name="Gu Z."/>
            <person name="Guan P."/>
            <person name="Harris M."/>
            <person name="Harris N.L."/>
            <person name="Harvey D.A."/>
            <person name="Heiman T.J."/>
            <person name="Hernandez J.R."/>
            <person name="Houck J."/>
            <person name="Hostin D."/>
            <person name="Houston K.A."/>
            <person name="Howland T.J."/>
            <person name="Wei M.-H."/>
            <person name="Ibegwam C."/>
            <person name="Jalali M."/>
            <person name="Kalush F."/>
            <person name="Karpen G.H."/>
            <person name="Ke Z."/>
            <person name="Kennison J.A."/>
            <person name="Ketchum K.A."/>
            <person name="Kimmel B.E."/>
            <person name="Kodira C.D."/>
            <person name="Kraft C.L."/>
            <person name="Kravitz S."/>
            <person name="Kulp D."/>
            <person name="Lai Z."/>
            <person name="Lasko P."/>
            <person name="Lei Y."/>
            <person name="Levitsky A.A."/>
            <person name="Li J.H."/>
            <person name="Li Z."/>
            <person name="Liang Y."/>
            <person name="Lin X."/>
            <person name="Liu X."/>
            <person name="Mattei B."/>
            <person name="McIntosh T.C."/>
            <person name="McLeod M.P."/>
            <person name="McPherson D."/>
            <person name="Merkulov G."/>
            <person name="Milshina N.V."/>
            <person name="Mobarry C."/>
            <person name="Morris J."/>
            <person name="Moshrefi A."/>
            <person name="Mount S.M."/>
            <person name="Moy M."/>
            <person name="Murphy B."/>
            <person name="Murphy L."/>
            <person name="Muzny D.M."/>
            <person name="Nelson D.L."/>
            <person name="Nelson D.R."/>
            <person name="Nelson K.A."/>
            <person name="Nixon K."/>
            <person name="Nusskern D.R."/>
            <person name="Pacleb J.M."/>
            <person name="Palazzolo M."/>
            <person name="Pittman G.S."/>
            <person name="Pan S."/>
            <person name="Pollard J."/>
            <person name="Puri V."/>
            <person name="Reese M.G."/>
            <person name="Reinert K."/>
            <person name="Remington K."/>
            <person name="Saunders R.D.C."/>
            <person name="Scheeler F."/>
            <person name="Shen H."/>
            <person name="Shue B.C."/>
            <person name="Siden-Kiamos I."/>
            <person name="Simpson M."/>
            <person name="Skupski M.P."/>
            <person name="Smith T.J."/>
            <person name="Spier E."/>
            <person name="Spradling A.C."/>
            <person name="Stapleton M."/>
            <person name="Strong R."/>
            <person name="Sun E."/>
            <person name="Svirskas R."/>
            <person name="Tector C."/>
            <person name="Turner R."/>
            <person name="Venter E."/>
            <person name="Wang A.H."/>
            <person name="Wang X."/>
            <person name="Wang Z.-Y."/>
            <person name="Wassarman D.A."/>
            <person name="Weinstock G.M."/>
            <person name="Weissenbach J."/>
            <person name="Williams S.M."/>
            <person name="Woodage T."/>
            <person name="Worley K.C."/>
            <person name="Wu D."/>
            <person name="Yang S."/>
            <person name="Yao Q.A."/>
            <person name="Ye J."/>
            <person name="Yeh R.-F."/>
            <person name="Zaveri J.S."/>
            <person name="Zhan M."/>
            <person name="Zhang G."/>
            <person name="Zhao Q."/>
            <person name="Zheng L."/>
            <person name="Zheng X.H."/>
            <person name="Zhong F.N."/>
            <person name="Zhong W."/>
            <person name="Zhou X."/>
            <person name="Zhu S.C."/>
            <person name="Zhu X."/>
            <person name="Smith H.O."/>
            <person name="Gibbs R.A."/>
            <person name="Myers E.W."/>
            <person name="Rubin G.M."/>
            <person name="Venter J.C."/>
        </authorList>
    </citation>
    <scope>NUCLEOTIDE SEQUENCE [LARGE SCALE GENOMIC DNA]</scope>
    <source>
        <strain>Berkeley</strain>
    </source>
</reference>
<reference key="2">
    <citation type="journal article" date="2002" name="Genome Biol.">
        <title>Annotation of the Drosophila melanogaster euchromatic genome: a systematic review.</title>
        <authorList>
            <person name="Misra S."/>
            <person name="Crosby M.A."/>
            <person name="Mungall C.J."/>
            <person name="Matthews B.B."/>
            <person name="Campbell K.S."/>
            <person name="Hradecky P."/>
            <person name="Huang Y."/>
            <person name="Kaminker J.S."/>
            <person name="Millburn G.H."/>
            <person name="Prochnik S.E."/>
            <person name="Smith C.D."/>
            <person name="Tupy J.L."/>
            <person name="Whitfield E.J."/>
            <person name="Bayraktaroglu L."/>
            <person name="Berman B.P."/>
            <person name="Bettencourt B.R."/>
            <person name="Celniker S.E."/>
            <person name="de Grey A.D.N.J."/>
            <person name="Drysdale R.A."/>
            <person name="Harris N.L."/>
            <person name="Richter J."/>
            <person name="Russo S."/>
            <person name="Schroeder A.J."/>
            <person name="Shu S.Q."/>
            <person name="Stapleton M."/>
            <person name="Yamada C."/>
            <person name="Ashburner M."/>
            <person name="Gelbart W.M."/>
            <person name="Rubin G.M."/>
            <person name="Lewis S.E."/>
        </authorList>
    </citation>
    <scope>GENOME REANNOTATION</scope>
    <source>
        <strain>Berkeley</strain>
    </source>
</reference>
<reference key="3">
    <citation type="journal article" date="2000" name="Science">
        <title>From sequence to chromosome: the tip of the X chromosome of D. melanogaster.</title>
        <authorList>
            <person name="Benos P.V."/>
            <person name="Gatt M.K."/>
            <person name="Ashburner M."/>
            <person name="Murphy L."/>
            <person name="Harris D."/>
            <person name="Barrell B.G."/>
            <person name="Ferraz C."/>
            <person name="Vidal S."/>
            <person name="Brun C."/>
            <person name="Demailles J."/>
            <person name="Cadieu E."/>
            <person name="Dreano S."/>
            <person name="Gloux S."/>
            <person name="Lelaure V."/>
            <person name="Mottier S."/>
            <person name="Galibert F."/>
            <person name="Borkova D."/>
            <person name="Minana B."/>
            <person name="Kafatos F.C."/>
            <person name="Louis C."/>
            <person name="Siden-Kiamos I."/>
            <person name="Bolshakov S."/>
            <person name="Papagiannakis G."/>
            <person name="Spanos L."/>
            <person name="Cox S."/>
            <person name="Madueno E."/>
            <person name="de Pablos B."/>
            <person name="Modolell J."/>
            <person name="Peter A."/>
            <person name="Schoettler P."/>
            <person name="Werner M."/>
            <person name="Mourkioti F."/>
            <person name="Beinert N."/>
            <person name="Dowe G."/>
            <person name="Schaefer U."/>
            <person name="Jaeckle H."/>
            <person name="Bucheton A."/>
            <person name="Callister D.M."/>
            <person name="Campbell L.A."/>
            <person name="Darlamitsou A."/>
            <person name="Henderson N.S."/>
            <person name="McMillan P.J."/>
            <person name="Salles C."/>
            <person name="Tait E.A."/>
            <person name="Valenti P."/>
            <person name="Saunders R.D.C."/>
            <person name="Glover D.M."/>
        </authorList>
    </citation>
    <scope>NUCLEOTIDE SEQUENCE [LARGE SCALE GENOMIC DNA]</scope>
    <source>
        <strain>Oregon-R</strain>
    </source>
</reference>
<reference key="4">
    <citation type="journal article" date="2002" name="Genome Biol.">
        <title>A Drosophila full-length cDNA resource.</title>
        <authorList>
            <person name="Stapleton M."/>
            <person name="Carlson J.W."/>
            <person name="Brokstein P."/>
            <person name="Yu C."/>
            <person name="Champe M."/>
            <person name="George R.A."/>
            <person name="Guarin H."/>
            <person name="Kronmiller B."/>
            <person name="Pacleb J.M."/>
            <person name="Park S."/>
            <person name="Wan K.H."/>
            <person name="Rubin G.M."/>
            <person name="Celniker S.E."/>
        </authorList>
    </citation>
    <scope>NUCLEOTIDE SEQUENCE [LARGE SCALE MRNA]</scope>
    <source>
        <strain>Berkeley</strain>
        <tissue>Head</tissue>
    </source>
</reference>
<reference key="5">
    <citation type="journal article" date="2008" name="Genes Dev.">
        <title>A nucleostemin family GTPase, NS3, acts in serotonergic neurons to regulate insulin signaling and control body size.</title>
        <authorList>
            <person name="Kaplan D.D."/>
            <person name="Zimmermann G."/>
            <person name="Suyama K."/>
            <person name="Meyer T."/>
            <person name="Scott M.P."/>
        </authorList>
    </citation>
    <scope>FUNCTION</scope>
    <scope>SUBCELLULAR LOCATION</scope>
    <scope>TISSUE SPECIFICITY</scope>
    <scope>DISRUPTION PHENOTYPE</scope>
</reference>
<reference key="6">
    <citation type="journal article" date="2008" name="J. Proteome Res.">
        <title>Phosphoproteome analysis of Drosophila melanogaster embryos.</title>
        <authorList>
            <person name="Zhai B."/>
            <person name="Villen J."/>
            <person name="Beausoleil S.A."/>
            <person name="Mintseris J."/>
            <person name="Gygi S.P."/>
        </authorList>
    </citation>
    <scope>PHOSPHORYLATION [LARGE SCALE ANALYSIS] AT SER-276 AND SER-279</scope>
    <scope>IDENTIFICATION BY MASS SPECTROMETRY</scope>
    <source>
        <tissue>Embryo</tissue>
    </source>
</reference>
<protein>
    <recommendedName>
        <fullName>Large subunit GTPase 1 homolog</fullName>
        <ecNumber>3.6.1.-</ecNumber>
    </recommendedName>
    <alternativeName>
        <fullName>Nucleostemin-3</fullName>
    </alternativeName>
</protein>
<proteinExistence type="evidence at protein level"/>
<gene>
    <name type="primary">Ns3</name>
    <name type="synonym">l(1)G0431</name>
    <name type="ORF">CG14788</name>
</gene>
<feature type="chain" id="PRO_0000324559" description="Large subunit GTPase 1 homolog">
    <location>
        <begin position="1"/>
        <end position="606"/>
    </location>
</feature>
<feature type="domain" description="CP-type G" evidence="2">
    <location>
        <begin position="165"/>
        <end position="395"/>
    </location>
</feature>
<feature type="region of interest" description="Disordered" evidence="3">
    <location>
        <begin position="1"/>
        <end position="21"/>
    </location>
</feature>
<feature type="region of interest" description="Disordered" evidence="3">
    <location>
        <begin position="574"/>
        <end position="606"/>
    </location>
</feature>
<feature type="compositionally biased region" description="Basic residues" evidence="3">
    <location>
        <begin position="584"/>
        <end position="600"/>
    </location>
</feature>
<feature type="binding site" evidence="1">
    <location>
        <begin position="213"/>
        <end position="216"/>
    </location>
    <ligand>
        <name>GTP</name>
        <dbReference type="ChEBI" id="CHEBI:37565"/>
    </ligand>
</feature>
<feature type="binding site" evidence="1">
    <location>
        <begin position="344"/>
        <end position="351"/>
    </location>
    <ligand>
        <name>GTP</name>
        <dbReference type="ChEBI" id="CHEBI:37565"/>
    </ligand>
</feature>
<feature type="binding site" evidence="1">
    <location>
        <begin position="388"/>
        <end position="391"/>
    </location>
    <ligand>
        <name>GTP</name>
        <dbReference type="ChEBI" id="CHEBI:37565"/>
    </ligand>
</feature>
<feature type="modified residue" description="Phosphoserine" evidence="4">
    <location>
        <position position="276"/>
    </location>
</feature>
<feature type="modified residue" description="Phosphoserine" evidence="4">
    <location>
        <position position="279"/>
    </location>
</feature>
<accession>Q9W590</accession>
<sequence>MGKKNKGGAPNLGRQLIKDRFGHTQRRKVDNDTMLHTTELQDGYDWGRLNLSSVTEESSFQAFLRTAELAGTEFQAEKLNITFVNPKQRVGLLSKTQEQRMHQKHDEHRDQLKIPRRPKWTKETSAEELVRAENEAFLDWRRDLALLQEDEEILMTPYEKNLEFWRQLWRVVERSDVVVQIVDARNPLLFRSADLERYVKEVEPSKMNMILVNKSDLLTEEQRRHWAEYFDSEGIRTAFYSATLVEEELKREAEECLDSFPEVQQLRRAVEEIKQSLDSVEDALNVIEQKYKTIPETQNDELPRLPGDKNSPRLLSRLELIEFLRNIYTGPRHTEQHVTVGMVGYPNVGKSSTINSLMTVKKVSVSATPGKTKRFQTLFLDKDILLCDCPGLVMPSFVLTKADMLLNGILPIDQMRDHVPAVNLLCERIPRHVLEDKYGIVIAKPLEGEDMERPPHSEELLLAYGYNRGFMTSNGQPDQARSARYVLKDYVNGRLLYAMSPPSVPQTEYHTFPERQRRVIEESQLPGQQQRAMRINKSTSKELDNQFFSDKPTHAHVKGRTNFPNVRLANDGSLVAGNDPAAKPWRHVKKERREKLRKKFSHLDEH</sequence>
<dbReference type="EC" id="3.6.1.-"/>
<dbReference type="EMBL" id="AE014298">
    <property type="protein sequence ID" value="AAF45628.1"/>
    <property type="molecule type" value="Genomic_DNA"/>
</dbReference>
<dbReference type="EMBL" id="AL035632">
    <property type="protein sequence ID" value="CAB38462.1"/>
    <property type="molecule type" value="Genomic_DNA"/>
</dbReference>
<dbReference type="EMBL" id="AY047556">
    <property type="protein sequence ID" value="AAK77288.1"/>
    <property type="molecule type" value="mRNA"/>
</dbReference>
<dbReference type="RefSeq" id="NP_001284779.1">
    <property type="nucleotide sequence ID" value="NM_001297850.1"/>
</dbReference>
<dbReference type="RefSeq" id="NP_569915.1">
    <property type="nucleotide sequence ID" value="NM_130559.3"/>
</dbReference>
<dbReference type="SMR" id="Q9W590"/>
<dbReference type="BioGRID" id="57654">
    <property type="interactions" value="10"/>
</dbReference>
<dbReference type="FunCoup" id="Q9W590">
    <property type="interactions" value="2602"/>
</dbReference>
<dbReference type="IntAct" id="Q9W590">
    <property type="interactions" value="5"/>
</dbReference>
<dbReference type="STRING" id="7227.FBpp0308653"/>
<dbReference type="GlyGen" id="Q9W590">
    <property type="glycosylation" value="1 site"/>
</dbReference>
<dbReference type="iPTMnet" id="Q9W590"/>
<dbReference type="PaxDb" id="7227-FBpp0070284"/>
<dbReference type="DNASU" id="31097"/>
<dbReference type="EnsemblMetazoa" id="FBtr0070297">
    <property type="protein sequence ID" value="FBpp0070284"/>
    <property type="gene ID" value="FBgn0266284"/>
</dbReference>
<dbReference type="EnsemblMetazoa" id="FBtr0339578">
    <property type="protein sequence ID" value="FBpp0308653"/>
    <property type="gene ID" value="FBgn0266284"/>
</dbReference>
<dbReference type="GeneID" id="31097"/>
<dbReference type="KEGG" id="dme:Dmel_CG14788"/>
<dbReference type="AGR" id="FB:FBgn0266284"/>
<dbReference type="CTD" id="31097"/>
<dbReference type="FlyBase" id="FBgn0266284">
    <property type="gene designation" value="Ns3"/>
</dbReference>
<dbReference type="VEuPathDB" id="VectorBase:FBgn0266284"/>
<dbReference type="eggNOG" id="KOG1424">
    <property type="taxonomic scope" value="Eukaryota"/>
</dbReference>
<dbReference type="HOGENOM" id="CLU_011072_2_0_1"/>
<dbReference type="InParanoid" id="Q9W590"/>
<dbReference type="OMA" id="VNKADMM"/>
<dbReference type="OrthoDB" id="61815at2759"/>
<dbReference type="PhylomeDB" id="Q9W590"/>
<dbReference type="SignaLink" id="Q9W590"/>
<dbReference type="BioGRID-ORCS" id="31097">
    <property type="hits" value="0 hits in 1 CRISPR screen"/>
</dbReference>
<dbReference type="GenomeRNAi" id="31097"/>
<dbReference type="PRO" id="PR:Q9W590"/>
<dbReference type="Proteomes" id="UP000000803">
    <property type="component" value="Chromosome X"/>
</dbReference>
<dbReference type="Bgee" id="FBgn0266284">
    <property type="expression patterns" value="Expressed in adult enteroendocrine precursor cell in adult midgut (Drosophila) and 76 other cell types or tissues"/>
</dbReference>
<dbReference type="ExpressionAtlas" id="Q9W590">
    <property type="expression patterns" value="baseline and differential"/>
</dbReference>
<dbReference type="GO" id="GO:0015030">
    <property type="term" value="C:Cajal body"/>
    <property type="evidence" value="ECO:0000250"/>
    <property type="project" value="UniProtKB"/>
</dbReference>
<dbReference type="GO" id="GO:0005737">
    <property type="term" value="C:cytoplasm"/>
    <property type="evidence" value="ECO:0000314"/>
    <property type="project" value="UniProtKB"/>
</dbReference>
<dbReference type="GO" id="GO:0005829">
    <property type="term" value="C:cytosol"/>
    <property type="evidence" value="ECO:0000318"/>
    <property type="project" value="GO_Central"/>
</dbReference>
<dbReference type="GO" id="GO:0005783">
    <property type="term" value="C:endoplasmic reticulum"/>
    <property type="evidence" value="ECO:0000250"/>
    <property type="project" value="UniProtKB"/>
</dbReference>
<dbReference type="GO" id="GO:0005525">
    <property type="term" value="F:GTP binding"/>
    <property type="evidence" value="ECO:0000250"/>
    <property type="project" value="UniProtKB"/>
</dbReference>
<dbReference type="GO" id="GO:0003924">
    <property type="term" value="F:GTPase activity"/>
    <property type="evidence" value="ECO:0000314"/>
    <property type="project" value="FlyBase"/>
</dbReference>
<dbReference type="GO" id="GO:0051168">
    <property type="term" value="P:nuclear export"/>
    <property type="evidence" value="ECO:0000250"/>
    <property type="project" value="UniProtKB"/>
</dbReference>
<dbReference type="GO" id="GO:0015031">
    <property type="term" value="P:protein transport"/>
    <property type="evidence" value="ECO:0007669"/>
    <property type="project" value="UniProtKB-KW"/>
</dbReference>
<dbReference type="GO" id="GO:0046626">
    <property type="term" value="P:regulation of insulin receptor signaling pathway"/>
    <property type="evidence" value="ECO:0000315"/>
    <property type="project" value="UniProtKB"/>
</dbReference>
<dbReference type="GO" id="GO:0000054">
    <property type="term" value="P:ribosomal subunit export from nucleus"/>
    <property type="evidence" value="ECO:0000315"/>
    <property type="project" value="FlyBase"/>
</dbReference>
<dbReference type="CDD" id="cd01857">
    <property type="entry name" value="HSR1_MMR1"/>
    <property type="match status" value="1"/>
</dbReference>
<dbReference type="FunFam" id="1.10.1580.10:FF:000008">
    <property type="entry name" value="Large subunit GTPase 1"/>
    <property type="match status" value="1"/>
</dbReference>
<dbReference type="Gene3D" id="1.10.1580.10">
    <property type="match status" value="1"/>
</dbReference>
<dbReference type="Gene3D" id="3.40.50.300">
    <property type="entry name" value="P-loop containing nucleotide triphosphate hydrolases"/>
    <property type="match status" value="1"/>
</dbReference>
<dbReference type="InterPro" id="IPR030378">
    <property type="entry name" value="G_CP_dom"/>
</dbReference>
<dbReference type="InterPro" id="IPR043358">
    <property type="entry name" value="GNL1-like"/>
</dbReference>
<dbReference type="InterPro" id="IPR006073">
    <property type="entry name" value="GTP-bd"/>
</dbReference>
<dbReference type="InterPro" id="IPR023179">
    <property type="entry name" value="GTP-bd_ortho_bundle_sf"/>
</dbReference>
<dbReference type="InterPro" id="IPR027417">
    <property type="entry name" value="P-loop_NTPase"/>
</dbReference>
<dbReference type="PANTHER" id="PTHR45709:SF2">
    <property type="entry name" value="LARGE SUBUNIT GTPASE 1 HOMOLOG"/>
    <property type="match status" value="1"/>
</dbReference>
<dbReference type="PANTHER" id="PTHR45709">
    <property type="entry name" value="LARGE SUBUNIT GTPASE 1 HOMOLOG-RELATED"/>
    <property type="match status" value="1"/>
</dbReference>
<dbReference type="Pfam" id="PF01926">
    <property type="entry name" value="MMR_HSR1"/>
    <property type="match status" value="1"/>
</dbReference>
<dbReference type="SUPFAM" id="SSF52540">
    <property type="entry name" value="P-loop containing nucleoside triphosphate hydrolases"/>
    <property type="match status" value="1"/>
</dbReference>
<dbReference type="PROSITE" id="PS51721">
    <property type="entry name" value="G_CP"/>
    <property type="match status" value="1"/>
</dbReference>
<keyword id="KW-0963">Cytoplasm</keyword>
<keyword id="KW-0217">Developmental protein</keyword>
<keyword id="KW-0341">Growth regulation</keyword>
<keyword id="KW-0342">GTP-binding</keyword>
<keyword id="KW-0378">Hydrolase</keyword>
<keyword id="KW-0547">Nucleotide-binding</keyword>
<keyword id="KW-0597">Phosphoprotein</keyword>
<keyword id="KW-0653">Protein transport</keyword>
<keyword id="KW-1185">Reference proteome</keyword>
<keyword id="KW-0813">Transport</keyword>
<organism>
    <name type="scientific">Drosophila melanogaster</name>
    <name type="common">Fruit fly</name>
    <dbReference type="NCBI Taxonomy" id="7227"/>
    <lineage>
        <taxon>Eukaryota</taxon>
        <taxon>Metazoa</taxon>
        <taxon>Ecdysozoa</taxon>
        <taxon>Arthropoda</taxon>
        <taxon>Hexapoda</taxon>
        <taxon>Insecta</taxon>
        <taxon>Pterygota</taxon>
        <taxon>Neoptera</taxon>
        <taxon>Endopterygota</taxon>
        <taxon>Diptera</taxon>
        <taxon>Brachycera</taxon>
        <taxon>Muscomorpha</taxon>
        <taxon>Ephydroidea</taxon>
        <taxon>Drosophilidae</taxon>
        <taxon>Drosophila</taxon>
        <taxon>Sophophora</taxon>
    </lineage>
</organism>